<organism>
    <name type="scientific">Lacticaseibacillus paracasei (strain ATCC 334 / BCRC 17002 / CCUG 31169 / CIP 107868 / KCTC 3260 / NRRL B-441)</name>
    <name type="common">Lactobacillus paracasei</name>
    <dbReference type="NCBI Taxonomy" id="321967"/>
    <lineage>
        <taxon>Bacteria</taxon>
        <taxon>Bacillati</taxon>
        <taxon>Bacillota</taxon>
        <taxon>Bacilli</taxon>
        <taxon>Lactobacillales</taxon>
        <taxon>Lactobacillaceae</taxon>
        <taxon>Lacticaseibacillus</taxon>
    </lineage>
</organism>
<reference key="1">
    <citation type="journal article" date="2006" name="Proc. Natl. Acad. Sci. U.S.A.">
        <title>Comparative genomics of the lactic acid bacteria.</title>
        <authorList>
            <person name="Makarova K.S."/>
            <person name="Slesarev A."/>
            <person name="Wolf Y.I."/>
            <person name="Sorokin A."/>
            <person name="Mirkin B."/>
            <person name="Koonin E.V."/>
            <person name="Pavlov A."/>
            <person name="Pavlova N."/>
            <person name="Karamychev V."/>
            <person name="Polouchine N."/>
            <person name="Shakhova V."/>
            <person name="Grigoriev I."/>
            <person name="Lou Y."/>
            <person name="Rohksar D."/>
            <person name="Lucas S."/>
            <person name="Huang K."/>
            <person name="Goodstein D.M."/>
            <person name="Hawkins T."/>
            <person name="Plengvidhya V."/>
            <person name="Welker D."/>
            <person name="Hughes J."/>
            <person name="Goh Y."/>
            <person name="Benson A."/>
            <person name="Baldwin K."/>
            <person name="Lee J.-H."/>
            <person name="Diaz-Muniz I."/>
            <person name="Dosti B."/>
            <person name="Smeianov V."/>
            <person name="Wechter W."/>
            <person name="Barabote R."/>
            <person name="Lorca G."/>
            <person name="Altermann E."/>
            <person name="Barrangou R."/>
            <person name="Ganesan B."/>
            <person name="Xie Y."/>
            <person name="Rawsthorne H."/>
            <person name="Tamir D."/>
            <person name="Parker C."/>
            <person name="Breidt F."/>
            <person name="Broadbent J.R."/>
            <person name="Hutkins R."/>
            <person name="O'Sullivan D."/>
            <person name="Steele J."/>
            <person name="Unlu G."/>
            <person name="Saier M.H. Jr."/>
            <person name="Klaenhammer T."/>
            <person name="Richardson P."/>
            <person name="Kozyavkin S."/>
            <person name="Weimer B.C."/>
            <person name="Mills D.A."/>
        </authorList>
    </citation>
    <scope>NUCLEOTIDE SEQUENCE [LARGE SCALE GENOMIC DNA]</scope>
    <source>
        <strain>ATCC 334 / BCRC 17002 / CCUG 31169 / CIP 107868 / KCTC 3260 / NRRL B-441</strain>
    </source>
</reference>
<feature type="chain" id="PRO_1000052589" description="Large ribosomal subunit protein uL22">
    <location>
        <begin position="1"/>
        <end position="117"/>
    </location>
</feature>
<evidence type="ECO:0000255" key="1">
    <source>
        <dbReference type="HAMAP-Rule" id="MF_01331"/>
    </source>
</evidence>
<evidence type="ECO:0000305" key="2"/>
<keyword id="KW-1185">Reference proteome</keyword>
<keyword id="KW-0687">Ribonucleoprotein</keyword>
<keyword id="KW-0689">Ribosomal protein</keyword>
<keyword id="KW-0694">RNA-binding</keyword>
<keyword id="KW-0699">rRNA-binding</keyword>
<protein>
    <recommendedName>
        <fullName evidence="1">Large ribosomal subunit protein uL22</fullName>
    </recommendedName>
    <alternativeName>
        <fullName evidence="2">50S ribosomal protein L22</fullName>
    </alternativeName>
</protein>
<dbReference type="EMBL" id="CP000423">
    <property type="protein sequence ID" value="ABJ71234.1"/>
    <property type="molecule type" value="Genomic_DNA"/>
</dbReference>
<dbReference type="RefSeq" id="WP_003567555.1">
    <property type="nucleotide sequence ID" value="NC_008526.1"/>
</dbReference>
<dbReference type="RefSeq" id="YP_807676.1">
    <property type="nucleotide sequence ID" value="NC_008526.1"/>
</dbReference>
<dbReference type="SMR" id="Q034Y8"/>
<dbReference type="STRING" id="321967.LSEI_2498"/>
<dbReference type="PaxDb" id="321967-LSEI_2498"/>
<dbReference type="GeneID" id="93270084"/>
<dbReference type="KEGG" id="lca:LSEI_2498"/>
<dbReference type="PATRIC" id="fig|321967.11.peg.2452"/>
<dbReference type="HOGENOM" id="CLU_083987_3_3_9"/>
<dbReference type="PRO" id="PR:Q034Y8"/>
<dbReference type="Proteomes" id="UP000001651">
    <property type="component" value="Chromosome"/>
</dbReference>
<dbReference type="GO" id="GO:0022625">
    <property type="term" value="C:cytosolic large ribosomal subunit"/>
    <property type="evidence" value="ECO:0007669"/>
    <property type="project" value="TreeGrafter"/>
</dbReference>
<dbReference type="GO" id="GO:0019843">
    <property type="term" value="F:rRNA binding"/>
    <property type="evidence" value="ECO:0007669"/>
    <property type="project" value="UniProtKB-UniRule"/>
</dbReference>
<dbReference type="GO" id="GO:0003735">
    <property type="term" value="F:structural constituent of ribosome"/>
    <property type="evidence" value="ECO:0007669"/>
    <property type="project" value="InterPro"/>
</dbReference>
<dbReference type="GO" id="GO:0006412">
    <property type="term" value="P:translation"/>
    <property type="evidence" value="ECO:0007669"/>
    <property type="project" value="UniProtKB-UniRule"/>
</dbReference>
<dbReference type="CDD" id="cd00336">
    <property type="entry name" value="Ribosomal_L22"/>
    <property type="match status" value="1"/>
</dbReference>
<dbReference type="FunFam" id="3.90.470.10:FF:000001">
    <property type="entry name" value="50S ribosomal protein L22"/>
    <property type="match status" value="1"/>
</dbReference>
<dbReference type="Gene3D" id="3.90.470.10">
    <property type="entry name" value="Ribosomal protein L22/L17"/>
    <property type="match status" value="1"/>
</dbReference>
<dbReference type="HAMAP" id="MF_01331_B">
    <property type="entry name" value="Ribosomal_uL22_B"/>
    <property type="match status" value="1"/>
</dbReference>
<dbReference type="InterPro" id="IPR001063">
    <property type="entry name" value="Ribosomal_uL22"/>
</dbReference>
<dbReference type="InterPro" id="IPR005727">
    <property type="entry name" value="Ribosomal_uL22_bac/chlpt-type"/>
</dbReference>
<dbReference type="InterPro" id="IPR047867">
    <property type="entry name" value="Ribosomal_uL22_bac/org-type"/>
</dbReference>
<dbReference type="InterPro" id="IPR018260">
    <property type="entry name" value="Ribosomal_uL22_CS"/>
</dbReference>
<dbReference type="InterPro" id="IPR036394">
    <property type="entry name" value="Ribosomal_uL22_sf"/>
</dbReference>
<dbReference type="NCBIfam" id="TIGR01044">
    <property type="entry name" value="rplV_bact"/>
    <property type="match status" value="1"/>
</dbReference>
<dbReference type="PANTHER" id="PTHR13501">
    <property type="entry name" value="CHLOROPLAST 50S RIBOSOMAL PROTEIN L22-RELATED"/>
    <property type="match status" value="1"/>
</dbReference>
<dbReference type="PANTHER" id="PTHR13501:SF8">
    <property type="entry name" value="LARGE RIBOSOMAL SUBUNIT PROTEIN UL22M"/>
    <property type="match status" value="1"/>
</dbReference>
<dbReference type="Pfam" id="PF00237">
    <property type="entry name" value="Ribosomal_L22"/>
    <property type="match status" value="1"/>
</dbReference>
<dbReference type="SUPFAM" id="SSF54843">
    <property type="entry name" value="Ribosomal protein L22"/>
    <property type="match status" value="1"/>
</dbReference>
<dbReference type="PROSITE" id="PS00464">
    <property type="entry name" value="RIBOSOMAL_L22"/>
    <property type="match status" value="1"/>
</dbReference>
<name>RL22_LACP3</name>
<comment type="function">
    <text evidence="1">This protein binds specifically to 23S rRNA; its binding is stimulated by other ribosomal proteins, e.g. L4, L17, and L20. It is important during the early stages of 50S assembly. It makes multiple contacts with different domains of the 23S rRNA in the assembled 50S subunit and ribosome (By similarity).</text>
</comment>
<comment type="function">
    <text evidence="1">The globular domain of the protein is located near the polypeptide exit tunnel on the outside of the subunit, while an extended beta-hairpin is found that lines the wall of the exit tunnel in the center of the 70S ribosome.</text>
</comment>
<comment type="subunit">
    <text evidence="1">Part of the 50S ribosomal subunit.</text>
</comment>
<comment type="similarity">
    <text evidence="1">Belongs to the universal ribosomal protein uL22 family.</text>
</comment>
<proteinExistence type="inferred from homology"/>
<gene>
    <name evidence="1" type="primary">rplV</name>
    <name type="ordered locus">LSEI_2498</name>
</gene>
<sequence>MADQITSATATAKTVRIAARKARLVIDLIRGRDVAEALAILEFTPRSGSPIIEKVLKSAIANAEHNYDLDAQNLYVSKAYVNEGPTLKRFRPRAKGSASPINKRTSHVTVVVSEKEA</sequence>
<accession>Q034Y8</accession>